<reference key="1">
    <citation type="journal article" date="2008" name="PLoS ONE">
        <title>A recalibrated molecular clock and independent origins for the cholera pandemic clones.</title>
        <authorList>
            <person name="Feng L."/>
            <person name="Reeves P.R."/>
            <person name="Lan R."/>
            <person name="Ren Y."/>
            <person name="Gao C."/>
            <person name="Zhou Z."/>
            <person name="Ren Y."/>
            <person name="Cheng J."/>
            <person name="Wang W."/>
            <person name="Wang J."/>
            <person name="Qian W."/>
            <person name="Li D."/>
            <person name="Wang L."/>
        </authorList>
    </citation>
    <scope>NUCLEOTIDE SEQUENCE [LARGE SCALE GENOMIC DNA]</scope>
    <source>
        <strain>M66-2</strain>
    </source>
</reference>
<name>RF3_VIBCM</name>
<sequence length="531" mass="59626">MLMSTTPYFGEVSKRRTFAIISHPDAGKTTITEKVLLFGRAIQVAGTVKGRGSNQHAKSDWMEMEKERGISVTTSVMQFPYGDCLVNLLDTPGHEDFSEDTYRTLTAVDSCLMVIDAAKGVEDRTRKLMEVTRLRDTPIVTFMNKLDREIRDPMELMDEVENELKIACSPITWPIGCGKEFKGVYHIHRDETILYTSGQGHTIQEERIIKGLDNPELDQAVGADLAAQLREELELVLGASHEFDRELFLQGELTPVFFGTALGNFGVDHMLDGLTQWAPSPMPRQAAERVVEASEEKFTGFVFKIQANMDPKHRDRIAFVRIVSGTYKQGMKMNHVRLGKQVNISDAVTFMAGDRARAEEAFAGDIIGLHNHGTIQIGDTFTQGETLKFTGIPNFAPELFRRIRLRDPLKQKQLLKGLVQLSEEGAVQVFRPLQNNDLIVGAVGVLQFDVVVSRLKSEYNVEAIYEGVNVATARWVECDDVKKFEEFKRKNQSNLALDGGDNLAYIAPTMVNLNLAQERSPEVKFRATREH</sequence>
<evidence type="ECO:0000255" key="1">
    <source>
        <dbReference type="HAMAP-Rule" id="MF_00072"/>
    </source>
</evidence>
<comment type="function">
    <text evidence="1">Increases the formation of ribosomal termination complexes and stimulates activities of RF-1 and RF-2. It binds guanine nucleotides and has strong preference for UGA stop codons. It may interact directly with the ribosome. The stimulation of RF-1 and RF-2 is significantly reduced by GTP and GDP, but not by GMP.</text>
</comment>
<comment type="subcellular location">
    <subcellularLocation>
        <location evidence="1">Cytoplasm</location>
    </subcellularLocation>
</comment>
<comment type="similarity">
    <text evidence="1">Belongs to the TRAFAC class translation factor GTPase superfamily. Classic translation factor GTPase family. PrfC subfamily.</text>
</comment>
<dbReference type="EMBL" id="CP001233">
    <property type="protein sequence ID" value="ACP04940.1"/>
    <property type="molecule type" value="Genomic_DNA"/>
</dbReference>
<dbReference type="SMR" id="C3LSR4"/>
<dbReference type="KEGG" id="vcm:VCM66_0617"/>
<dbReference type="HOGENOM" id="CLU_002794_2_1_6"/>
<dbReference type="Proteomes" id="UP000001217">
    <property type="component" value="Chromosome I"/>
</dbReference>
<dbReference type="GO" id="GO:0005829">
    <property type="term" value="C:cytosol"/>
    <property type="evidence" value="ECO:0007669"/>
    <property type="project" value="TreeGrafter"/>
</dbReference>
<dbReference type="GO" id="GO:0005525">
    <property type="term" value="F:GTP binding"/>
    <property type="evidence" value="ECO:0007669"/>
    <property type="project" value="UniProtKB-UniRule"/>
</dbReference>
<dbReference type="GO" id="GO:0003924">
    <property type="term" value="F:GTPase activity"/>
    <property type="evidence" value="ECO:0007669"/>
    <property type="project" value="InterPro"/>
</dbReference>
<dbReference type="GO" id="GO:0097216">
    <property type="term" value="F:guanosine tetraphosphate binding"/>
    <property type="evidence" value="ECO:0007669"/>
    <property type="project" value="UniProtKB-ARBA"/>
</dbReference>
<dbReference type="GO" id="GO:0016150">
    <property type="term" value="F:translation release factor activity, codon nonspecific"/>
    <property type="evidence" value="ECO:0007669"/>
    <property type="project" value="TreeGrafter"/>
</dbReference>
<dbReference type="GO" id="GO:0016149">
    <property type="term" value="F:translation release factor activity, codon specific"/>
    <property type="evidence" value="ECO:0007669"/>
    <property type="project" value="UniProtKB-UniRule"/>
</dbReference>
<dbReference type="GO" id="GO:0006449">
    <property type="term" value="P:regulation of translational termination"/>
    <property type="evidence" value="ECO:0007669"/>
    <property type="project" value="UniProtKB-UniRule"/>
</dbReference>
<dbReference type="CDD" id="cd04169">
    <property type="entry name" value="RF3"/>
    <property type="match status" value="1"/>
</dbReference>
<dbReference type="CDD" id="cd03689">
    <property type="entry name" value="RF3_II"/>
    <property type="match status" value="1"/>
</dbReference>
<dbReference type="CDD" id="cd16259">
    <property type="entry name" value="RF3_III"/>
    <property type="match status" value="1"/>
</dbReference>
<dbReference type="FunFam" id="2.40.30.10:FF:000040">
    <property type="entry name" value="Peptide chain release factor 3"/>
    <property type="match status" value="1"/>
</dbReference>
<dbReference type="FunFam" id="3.30.70.3280:FF:000001">
    <property type="entry name" value="Peptide chain release factor 3"/>
    <property type="match status" value="1"/>
</dbReference>
<dbReference type="FunFam" id="3.40.50.300:FF:000542">
    <property type="entry name" value="Peptide chain release factor 3"/>
    <property type="match status" value="1"/>
</dbReference>
<dbReference type="Gene3D" id="3.40.50.300">
    <property type="entry name" value="P-loop containing nucleotide triphosphate hydrolases"/>
    <property type="match status" value="3"/>
</dbReference>
<dbReference type="Gene3D" id="3.30.70.3280">
    <property type="entry name" value="Peptide chain release factor 3, domain III"/>
    <property type="match status" value="1"/>
</dbReference>
<dbReference type="HAMAP" id="MF_00072">
    <property type="entry name" value="Rel_fac_3"/>
    <property type="match status" value="1"/>
</dbReference>
<dbReference type="InterPro" id="IPR053905">
    <property type="entry name" value="EF-G-like_DII"/>
</dbReference>
<dbReference type="InterPro" id="IPR035647">
    <property type="entry name" value="EFG_III/V"/>
</dbReference>
<dbReference type="InterPro" id="IPR031157">
    <property type="entry name" value="G_TR_CS"/>
</dbReference>
<dbReference type="InterPro" id="IPR027417">
    <property type="entry name" value="P-loop_NTPase"/>
</dbReference>
<dbReference type="InterPro" id="IPR004548">
    <property type="entry name" value="PrfC"/>
</dbReference>
<dbReference type="InterPro" id="IPR032090">
    <property type="entry name" value="RF3_C"/>
</dbReference>
<dbReference type="InterPro" id="IPR038467">
    <property type="entry name" value="RF3_dom_3_sf"/>
</dbReference>
<dbReference type="InterPro" id="IPR041732">
    <property type="entry name" value="RF3_GTP-bd"/>
</dbReference>
<dbReference type="InterPro" id="IPR005225">
    <property type="entry name" value="Small_GTP-bd"/>
</dbReference>
<dbReference type="InterPro" id="IPR000795">
    <property type="entry name" value="T_Tr_GTP-bd_dom"/>
</dbReference>
<dbReference type="InterPro" id="IPR009000">
    <property type="entry name" value="Transl_B-barrel_sf"/>
</dbReference>
<dbReference type="NCBIfam" id="TIGR00503">
    <property type="entry name" value="prfC"/>
    <property type="match status" value="1"/>
</dbReference>
<dbReference type="NCBIfam" id="NF001964">
    <property type="entry name" value="PRK00741.1"/>
    <property type="match status" value="1"/>
</dbReference>
<dbReference type="NCBIfam" id="TIGR00231">
    <property type="entry name" value="small_GTP"/>
    <property type="match status" value="1"/>
</dbReference>
<dbReference type="PANTHER" id="PTHR43556">
    <property type="entry name" value="PEPTIDE CHAIN RELEASE FACTOR RF3"/>
    <property type="match status" value="1"/>
</dbReference>
<dbReference type="PANTHER" id="PTHR43556:SF2">
    <property type="entry name" value="PEPTIDE CHAIN RELEASE FACTOR RF3"/>
    <property type="match status" value="1"/>
</dbReference>
<dbReference type="Pfam" id="PF22042">
    <property type="entry name" value="EF-G_D2"/>
    <property type="match status" value="1"/>
</dbReference>
<dbReference type="Pfam" id="PF00009">
    <property type="entry name" value="GTP_EFTU"/>
    <property type="match status" value="1"/>
</dbReference>
<dbReference type="Pfam" id="PF16658">
    <property type="entry name" value="RF3_C"/>
    <property type="match status" value="1"/>
</dbReference>
<dbReference type="PRINTS" id="PR00315">
    <property type="entry name" value="ELONGATNFCT"/>
</dbReference>
<dbReference type="SUPFAM" id="SSF54980">
    <property type="entry name" value="EF-G C-terminal domain-like"/>
    <property type="match status" value="1"/>
</dbReference>
<dbReference type="SUPFAM" id="SSF52540">
    <property type="entry name" value="P-loop containing nucleoside triphosphate hydrolases"/>
    <property type="match status" value="1"/>
</dbReference>
<dbReference type="SUPFAM" id="SSF50447">
    <property type="entry name" value="Translation proteins"/>
    <property type="match status" value="1"/>
</dbReference>
<dbReference type="PROSITE" id="PS00301">
    <property type="entry name" value="G_TR_1"/>
    <property type="match status" value="1"/>
</dbReference>
<dbReference type="PROSITE" id="PS51722">
    <property type="entry name" value="G_TR_2"/>
    <property type="match status" value="1"/>
</dbReference>
<gene>
    <name evidence="1" type="primary">prfC</name>
    <name type="ordered locus">VCM66_0617</name>
</gene>
<proteinExistence type="inferred from homology"/>
<accession>C3LSR4</accession>
<organism>
    <name type="scientific">Vibrio cholerae serotype O1 (strain M66-2)</name>
    <dbReference type="NCBI Taxonomy" id="579112"/>
    <lineage>
        <taxon>Bacteria</taxon>
        <taxon>Pseudomonadati</taxon>
        <taxon>Pseudomonadota</taxon>
        <taxon>Gammaproteobacteria</taxon>
        <taxon>Vibrionales</taxon>
        <taxon>Vibrionaceae</taxon>
        <taxon>Vibrio</taxon>
    </lineage>
</organism>
<protein>
    <recommendedName>
        <fullName evidence="1">Peptide chain release factor 3</fullName>
        <shortName evidence="1">RF-3</shortName>
    </recommendedName>
</protein>
<feature type="chain" id="PRO_1000118102" description="Peptide chain release factor 3">
    <location>
        <begin position="1"/>
        <end position="531"/>
    </location>
</feature>
<feature type="domain" description="tr-type G">
    <location>
        <begin position="13"/>
        <end position="282"/>
    </location>
</feature>
<feature type="binding site" evidence="1">
    <location>
        <begin position="22"/>
        <end position="29"/>
    </location>
    <ligand>
        <name>GTP</name>
        <dbReference type="ChEBI" id="CHEBI:37565"/>
    </ligand>
</feature>
<feature type="binding site" evidence="1">
    <location>
        <begin position="90"/>
        <end position="94"/>
    </location>
    <ligand>
        <name>GTP</name>
        <dbReference type="ChEBI" id="CHEBI:37565"/>
    </ligand>
</feature>
<feature type="binding site" evidence="1">
    <location>
        <begin position="144"/>
        <end position="147"/>
    </location>
    <ligand>
        <name>GTP</name>
        <dbReference type="ChEBI" id="CHEBI:37565"/>
    </ligand>
</feature>
<keyword id="KW-0963">Cytoplasm</keyword>
<keyword id="KW-0342">GTP-binding</keyword>
<keyword id="KW-0547">Nucleotide-binding</keyword>
<keyword id="KW-0648">Protein biosynthesis</keyword>